<name>GLND_LEGPC</name>
<dbReference type="EC" id="2.7.7.59" evidence="1"/>
<dbReference type="EC" id="3.1.4.-" evidence="1"/>
<dbReference type="EMBL" id="CP000675">
    <property type="protein sequence ID" value="ABQ55120.1"/>
    <property type="molecule type" value="Genomic_DNA"/>
</dbReference>
<dbReference type="RefSeq" id="WP_011946677.1">
    <property type="nucleotide sequence ID" value="NC_009494.2"/>
</dbReference>
<dbReference type="SMR" id="A5ICM0"/>
<dbReference type="KEGG" id="lpc:LPC_1154"/>
<dbReference type="HOGENOM" id="CLU_012833_1_0_6"/>
<dbReference type="GO" id="GO:0008773">
    <property type="term" value="F:[protein-PII] uridylyltransferase activity"/>
    <property type="evidence" value="ECO:0007669"/>
    <property type="project" value="UniProtKB-UniRule"/>
</dbReference>
<dbReference type="GO" id="GO:0008081">
    <property type="term" value="F:phosphoric diester hydrolase activity"/>
    <property type="evidence" value="ECO:0007669"/>
    <property type="project" value="UniProtKB-UniRule"/>
</dbReference>
<dbReference type="GO" id="GO:0006808">
    <property type="term" value="P:regulation of nitrogen utilization"/>
    <property type="evidence" value="ECO:0007669"/>
    <property type="project" value="UniProtKB-UniRule"/>
</dbReference>
<dbReference type="CDD" id="cd04899">
    <property type="entry name" value="ACT_ACR-UUR-like_2"/>
    <property type="match status" value="1"/>
</dbReference>
<dbReference type="CDD" id="cd04900">
    <property type="entry name" value="ACT_UUR-like_1"/>
    <property type="match status" value="1"/>
</dbReference>
<dbReference type="CDD" id="cd00077">
    <property type="entry name" value="HDc"/>
    <property type="match status" value="1"/>
</dbReference>
<dbReference type="CDD" id="cd05401">
    <property type="entry name" value="NT_GlnE_GlnD_like"/>
    <property type="match status" value="1"/>
</dbReference>
<dbReference type="Gene3D" id="3.30.460.10">
    <property type="entry name" value="Beta Polymerase, domain 2"/>
    <property type="match status" value="1"/>
</dbReference>
<dbReference type="Gene3D" id="1.10.3210.10">
    <property type="entry name" value="Hypothetical protein af1432"/>
    <property type="match status" value="1"/>
</dbReference>
<dbReference type="HAMAP" id="MF_00277">
    <property type="entry name" value="PII_uridylyl_transf"/>
    <property type="match status" value="1"/>
</dbReference>
<dbReference type="InterPro" id="IPR045865">
    <property type="entry name" value="ACT-like_dom_sf"/>
</dbReference>
<dbReference type="InterPro" id="IPR002912">
    <property type="entry name" value="ACT_dom"/>
</dbReference>
<dbReference type="InterPro" id="IPR005105">
    <property type="entry name" value="GlnD_Uridyltrans_N"/>
</dbReference>
<dbReference type="InterPro" id="IPR003607">
    <property type="entry name" value="HD/PDEase_dom"/>
</dbReference>
<dbReference type="InterPro" id="IPR006674">
    <property type="entry name" value="HD_domain"/>
</dbReference>
<dbReference type="InterPro" id="IPR043519">
    <property type="entry name" value="NT_sf"/>
</dbReference>
<dbReference type="InterPro" id="IPR013546">
    <property type="entry name" value="PII_UdlTrfase/GS_AdlTrfase"/>
</dbReference>
<dbReference type="InterPro" id="IPR010043">
    <property type="entry name" value="UTase/UR"/>
</dbReference>
<dbReference type="NCBIfam" id="TIGR01693">
    <property type="entry name" value="UTase_glnD"/>
    <property type="match status" value="1"/>
</dbReference>
<dbReference type="PANTHER" id="PTHR47320">
    <property type="entry name" value="BIFUNCTIONAL URIDYLYLTRANSFERASE/URIDYLYL-REMOVING ENZYME"/>
    <property type="match status" value="1"/>
</dbReference>
<dbReference type="PANTHER" id="PTHR47320:SF1">
    <property type="entry name" value="BIFUNCTIONAL URIDYLYLTRANSFERASE_URIDYLYL-REMOVING ENZYME"/>
    <property type="match status" value="1"/>
</dbReference>
<dbReference type="Pfam" id="PF03445">
    <property type="entry name" value="DUF294"/>
    <property type="match status" value="1"/>
</dbReference>
<dbReference type="Pfam" id="PF08335">
    <property type="entry name" value="GlnD_UR_UTase"/>
    <property type="match status" value="1"/>
</dbReference>
<dbReference type="Pfam" id="PF01966">
    <property type="entry name" value="HD"/>
    <property type="match status" value="1"/>
</dbReference>
<dbReference type="PIRSF" id="PIRSF006288">
    <property type="entry name" value="PII_uridyltransf"/>
    <property type="match status" value="1"/>
</dbReference>
<dbReference type="SMART" id="SM00471">
    <property type="entry name" value="HDc"/>
    <property type="match status" value="1"/>
</dbReference>
<dbReference type="SUPFAM" id="SSF55021">
    <property type="entry name" value="ACT-like"/>
    <property type="match status" value="1"/>
</dbReference>
<dbReference type="SUPFAM" id="SSF109604">
    <property type="entry name" value="HD-domain/PDEase-like"/>
    <property type="match status" value="1"/>
</dbReference>
<dbReference type="SUPFAM" id="SSF81301">
    <property type="entry name" value="Nucleotidyltransferase"/>
    <property type="match status" value="1"/>
</dbReference>
<dbReference type="SUPFAM" id="SSF81593">
    <property type="entry name" value="Nucleotidyltransferase substrate binding subunit/domain"/>
    <property type="match status" value="1"/>
</dbReference>
<dbReference type="PROSITE" id="PS51671">
    <property type="entry name" value="ACT"/>
    <property type="match status" value="2"/>
</dbReference>
<dbReference type="PROSITE" id="PS51831">
    <property type="entry name" value="HD"/>
    <property type="match status" value="1"/>
</dbReference>
<comment type="function">
    <text evidence="1">Modifies, by uridylylation and deuridylylation, the PII regulatory proteins (GlnB and homologs), in response to the nitrogen status of the cell that GlnD senses through the glutamine level. Under low glutamine levels, catalyzes the conversion of the PII proteins and UTP to PII-UMP and PPi, while under higher glutamine levels, GlnD hydrolyzes PII-UMP to PII and UMP (deuridylylation). Thus, controls uridylylation state and activity of the PII proteins, and plays an important role in the regulation of nitrogen assimilation and metabolism.</text>
</comment>
<comment type="catalytic activity">
    <reaction evidence="1">
        <text>[protein-PII]-L-tyrosine + UTP = [protein-PII]-uridylyl-L-tyrosine + diphosphate</text>
        <dbReference type="Rhea" id="RHEA:13673"/>
        <dbReference type="Rhea" id="RHEA-COMP:12147"/>
        <dbReference type="Rhea" id="RHEA-COMP:12148"/>
        <dbReference type="ChEBI" id="CHEBI:33019"/>
        <dbReference type="ChEBI" id="CHEBI:46398"/>
        <dbReference type="ChEBI" id="CHEBI:46858"/>
        <dbReference type="ChEBI" id="CHEBI:90602"/>
        <dbReference type="EC" id="2.7.7.59"/>
    </reaction>
</comment>
<comment type="catalytic activity">
    <reaction evidence="1">
        <text>[protein-PII]-uridylyl-L-tyrosine + H2O = [protein-PII]-L-tyrosine + UMP + H(+)</text>
        <dbReference type="Rhea" id="RHEA:48600"/>
        <dbReference type="Rhea" id="RHEA-COMP:12147"/>
        <dbReference type="Rhea" id="RHEA-COMP:12148"/>
        <dbReference type="ChEBI" id="CHEBI:15377"/>
        <dbReference type="ChEBI" id="CHEBI:15378"/>
        <dbReference type="ChEBI" id="CHEBI:46858"/>
        <dbReference type="ChEBI" id="CHEBI:57865"/>
        <dbReference type="ChEBI" id="CHEBI:90602"/>
    </reaction>
</comment>
<comment type="cofactor">
    <cofactor evidence="1">
        <name>Mg(2+)</name>
        <dbReference type="ChEBI" id="CHEBI:18420"/>
    </cofactor>
</comment>
<comment type="activity regulation">
    <text evidence="1">Uridylyltransferase (UTase) activity is inhibited by glutamine, while glutamine activates uridylyl-removing (UR) activity.</text>
</comment>
<comment type="domain">
    <text evidence="1">Has four distinct domains: an N-terminal nucleotidyltransferase (NT) domain responsible for UTase activity, a central HD domain that encodes UR activity, and two C-terminal ACT domains that seem to have a role in glutamine sensing.</text>
</comment>
<comment type="similarity">
    <text evidence="1">Belongs to the GlnD family.</text>
</comment>
<accession>A5ICM0</accession>
<evidence type="ECO:0000255" key="1">
    <source>
        <dbReference type="HAMAP-Rule" id="MF_00277"/>
    </source>
</evidence>
<evidence type="ECO:0000255" key="2">
    <source>
        <dbReference type="PROSITE-ProRule" id="PRU01175"/>
    </source>
</evidence>
<reference key="1">
    <citation type="submission" date="2006-11" db="EMBL/GenBank/DDBJ databases">
        <title>Identification and characterization of a new conjugation/ type IVA secretion system (trb/tra) of L. pneumophila Corby localized on a mobile genomic island.</title>
        <authorList>
            <person name="Gloeckner G."/>
            <person name="Albert-Weissenberger C."/>
            <person name="Weinmann E."/>
            <person name="Jacobi S."/>
            <person name="Schunder E."/>
            <person name="Steinert M."/>
            <person name="Buchrieser C."/>
            <person name="Hacker J."/>
            <person name="Heuner K."/>
        </authorList>
    </citation>
    <scope>NUCLEOTIDE SEQUENCE [LARGE SCALE GENOMIC DNA]</scope>
    <source>
        <strain>Corby</strain>
    </source>
</reference>
<feature type="chain" id="PRO_1000022345" description="Bifunctional uridylyltransferase/uridylyl-removing enzyme">
    <location>
        <begin position="1"/>
        <end position="861"/>
    </location>
</feature>
<feature type="domain" description="HD" evidence="2">
    <location>
        <begin position="440"/>
        <end position="562"/>
    </location>
</feature>
<feature type="domain" description="ACT 1" evidence="1">
    <location>
        <begin position="679"/>
        <end position="760"/>
    </location>
</feature>
<feature type="domain" description="ACT 2" evidence="1">
    <location>
        <begin position="788"/>
        <end position="861"/>
    </location>
</feature>
<feature type="region of interest" description="Uridylyltransferase">
    <location>
        <begin position="1"/>
        <end position="321"/>
    </location>
</feature>
<feature type="region of interest" description="Uridylyl-removing">
    <location>
        <begin position="322"/>
        <end position="678"/>
    </location>
</feature>
<gene>
    <name evidence="1" type="primary">glnD</name>
    <name type="ordered locus">LPC_1154</name>
</gene>
<proteinExistence type="inferred from homology"/>
<sequence length="861" mass="100711">MKNDNRIIKNTIKQFKEKLCKDFSQKANITSITRKLAVFIDTILIQLFIKNKLHFGDNFCLLALGSYGRRELQLHSDIDLLILHTEKVSNIQLQRAQKFIQDCWDVGLEVSHQITTVSSCANLASQDLSVISTIMDMFLLCGHGALMEELIYQTHTLHMWPSHQYFFAKLQEQQNRYAKYGETAYNLEPNIKNGPGGLRDLQILLSISKRHFKIKKLAEGIGYGFITDKEYEELKYCQNFLWRVRFALHMLAGKPEERLSFDYQVKLAQFFGYQDQSHILAIEQFMKDYFKVIKRNRELNEMLLQWFNETIVYHQKQKIIRLDDEFQLSNRFIEVRNNRVFKQNPQSILKLFYWLVKRPDIEGVRASTIRLIRESLFLMGKRFRESKETANIFINIFRTGNDPYDALQRMNRYGVLAHYLDCFATATGQMQYDLFHAYTVDQHTLFVIRNISRFKKNEYAKQFPLCAKIITALEKPEILYLGALFHDIAKGRGGDHSELGAIEAQQFTQRHYMEAEDSKLIVWLVRYHLLMSQTAQRKDIYDPKTIEQFCQLLPHARYLDYLYLLTVADICGTNPTLWNAWKDSLLKELYHAAKTRLHKQQELLDEAALISIRKQYAMDILISDGISSRVIQDLWSQFKGKYFLHESPEVIARHTKAILNSKQFPVVIIMPHHSQGGTEVFIYMPHKDERFTITTSVLSNHHVTIQEAAIITCDNQFDLDTYIILDENNQAFLNEQRARDIQKNLCDHLANTGRLPAVSRRRLSRALTHFNVKTQINFIDDNTNHQTQLFLVTNDRPGLLATISRVFLTLNIHLHNAKIATAGERVEDMFYISNQTGYSLNHEEKTILKEKLILEISKSKY</sequence>
<protein>
    <recommendedName>
        <fullName evidence="1">Bifunctional uridylyltransferase/uridylyl-removing enzyme</fullName>
        <shortName evidence="1">UTase/UR</shortName>
    </recommendedName>
    <alternativeName>
        <fullName evidence="1">Bifunctional [protein-PII] modification enzyme</fullName>
    </alternativeName>
    <alternativeName>
        <fullName evidence="1">Bifunctional nitrogen sensor protein</fullName>
    </alternativeName>
    <domain>
        <recommendedName>
            <fullName evidence="1">[Protein-PII] uridylyltransferase</fullName>
            <shortName evidence="1">PII uridylyltransferase</shortName>
            <shortName evidence="1">UTase</shortName>
            <ecNumber evidence="1">2.7.7.59</ecNumber>
        </recommendedName>
    </domain>
    <domain>
        <recommendedName>
            <fullName evidence="1">[Protein-PII]-UMP uridylyl-removing enzyme</fullName>
            <shortName evidence="1">UR</shortName>
            <ecNumber evidence="1">3.1.4.-</ecNumber>
        </recommendedName>
    </domain>
</protein>
<organism>
    <name type="scientific">Legionella pneumophila (strain Corby)</name>
    <dbReference type="NCBI Taxonomy" id="400673"/>
    <lineage>
        <taxon>Bacteria</taxon>
        <taxon>Pseudomonadati</taxon>
        <taxon>Pseudomonadota</taxon>
        <taxon>Gammaproteobacteria</taxon>
        <taxon>Legionellales</taxon>
        <taxon>Legionellaceae</taxon>
        <taxon>Legionella</taxon>
    </lineage>
</organism>
<keyword id="KW-0378">Hydrolase</keyword>
<keyword id="KW-0460">Magnesium</keyword>
<keyword id="KW-0511">Multifunctional enzyme</keyword>
<keyword id="KW-0548">Nucleotidyltransferase</keyword>
<keyword id="KW-0677">Repeat</keyword>
<keyword id="KW-0808">Transferase</keyword>